<comment type="subcellular location">
    <subcellularLocation>
        <location evidence="3">Membrane</location>
        <topology evidence="3">Multi-pass membrane protein</topology>
    </subcellularLocation>
</comment>
<comment type="similarity">
    <text evidence="3">Belongs to the ABC transporter superfamily. ABCA family. CPR flippase (TC 3.A.1.211) subfamily.</text>
</comment>
<comment type="sequence caution" evidence="3">
    <conflict type="erroneous gene model prediction">
        <sequence resource="EMBL-CDS" id="CAB41858"/>
    </conflict>
</comment>
<feature type="chain" id="PRO_0000240325" description="ABC transporter A family member 4">
    <location>
        <begin position="1"/>
        <end position="937"/>
    </location>
</feature>
<feature type="transmembrane region" description="Helical" evidence="1">
    <location>
        <begin position="34"/>
        <end position="54"/>
    </location>
</feature>
<feature type="transmembrane region" description="Helical" evidence="1">
    <location>
        <begin position="340"/>
        <end position="360"/>
    </location>
</feature>
<feature type="transmembrane region" description="Helical" evidence="1">
    <location>
        <begin position="394"/>
        <end position="414"/>
    </location>
</feature>
<feature type="transmembrane region" description="Helical" evidence="1">
    <location>
        <begin position="423"/>
        <end position="443"/>
    </location>
</feature>
<feature type="transmembrane region" description="Helical" evidence="1">
    <location>
        <begin position="455"/>
        <end position="475"/>
    </location>
</feature>
<feature type="transmembrane region" description="Helical" evidence="1">
    <location>
        <begin position="478"/>
        <end position="498"/>
    </location>
</feature>
<feature type="transmembrane region" description="Helical" evidence="1">
    <location>
        <begin position="528"/>
        <end position="548"/>
    </location>
</feature>
<feature type="domain" description="ABC transporter" evidence="2">
    <location>
        <begin position="618"/>
        <end position="852"/>
    </location>
</feature>
<feature type="binding site" evidence="2">
    <location>
        <begin position="653"/>
        <end position="660"/>
    </location>
    <ligand>
        <name>ATP</name>
        <dbReference type="ChEBI" id="CHEBI:30616"/>
    </ligand>
</feature>
<dbReference type="EMBL" id="AL049746">
    <property type="protein sequence ID" value="CAB41858.1"/>
    <property type="status" value="ALT_SEQ"/>
    <property type="molecule type" value="Genomic_DNA"/>
</dbReference>
<dbReference type="EMBL" id="CP002686">
    <property type="protein sequence ID" value="AEE78325.2"/>
    <property type="molecule type" value="Genomic_DNA"/>
</dbReference>
<dbReference type="PIR" id="T07714">
    <property type="entry name" value="T07714"/>
</dbReference>
<dbReference type="RefSeq" id="NP_001319703.1">
    <property type="nucleotide sequence ID" value="NM_001339331.1"/>
</dbReference>
<dbReference type="SMR" id="Q9STT8"/>
<dbReference type="FunCoup" id="Q9STT8">
    <property type="interactions" value="9"/>
</dbReference>
<dbReference type="STRING" id="3702.Q9STT8"/>
<dbReference type="GlyGen" id="Q9STT8">
    <property type="glycosylation" value="1 site"/>
</dbReference>
<dbReference type="iPTMnet" id="Q9STT8"/>
<dbReference type="PaxDb" id="3702-AT3G47750.1"/>
<dbReference type="ProteomicsDB" id="244565"/>
<dbReference type="EnsemblPlants" id="AT3G47750.1">
    <property type="protein sequence ID" value="AT3G47750.1"/>
    <property type="gene ID" value="AT3G47750"/>
</dbReference>
<dbReference type="GeneID" id="823929"/>
<dbReference type="Gramene" id="AT3G47750.1">
    <property type="protein sequence ID" value="AT3G47750.1"/>
    <property type="gene ID" value="AT3G47750"/>
</dbReference>
<dbReference type="KEGG" id="ath:AT3G47750"/>
<dbReference type="Araport" id="AT3G47750"/>
<dbReference type="TAIR" id="AT3G47750">
    <property type="gene designation" value="ABCA4"/>
</dbReference>
<dbReference type="eggNOG" id="KOG0059">
    <property type="taxonomic scope" value="Eukaryota"/>
</dbReference>
<dbReference type="HOGENOM" id="CLU_000604_19_5_1"/>
<dbReference type="InParanoid" id="Q9STT8"/>
<dbReference type="OMA" id="LIAAYYM"/>
<dbReference type="PhylomeDB" id="Q9STT8"/>
<dbReference type="PRO" id="PR:Q9STT8"/>
<dbReference type="Proteomes" id="UP000006548">
    <property type="component" value="Chromosome 3"/>
</dbReference>
<dbReference type="ExpressionAtlas" id="Q9STT8">
    <property type="expression patterns" value="baseline and differential"/>
</dbReference>
<dbReference type="GO" id="GO:0016020">
    <property type="term" value="C:membrane"/>
    <property type="evidence" value="ECO:0007669"/>
    <property type="project" value="UniProtKB-SubCell"/>
</dbReference>
<dbReference type="GO" id="GO:0140359">
    <property type="term" value="F:ABC-type transporter activity"/>
    <property type="evidence" value="ECO:0007669"/>
    <property type="project" value="InterPro"/>
</dbReference>
<dbReference type="GO" id="GO:0005524">
    <property type="term" value="F:ATP binding"/>
    <property type="evidence" value="ECO:0007669"/>
    <property type="project" value="UniProtKB-KW"/>
</dbReference>
<dbReference type="GO" id="GO:0016887">
    <property type="term" value="F:ATP hydrolysis activity"/>
    <property type="evidence" value="ECO:0007669"/>
    <property type="project" value="InterPro"/>
</dbReference>
<dbReference type="CDD" id="cd03263">
    <property type="entry name" value="ABC_subfamily_A"/>
    <property type="match status" value="1"/>
</dbReference>
<dbReference type="FunFam" id="3.40.50.300:FF:000633">
    <property type="entry name" value="ABC transporter A family member 7"/>
    <property type="match status" value="1"/>
</dbReference>
<dbReference type="Gene3D" id="3.40.50.300">
    <property type="entry name" value="P-loop containing nucleotide triphosphate hydrolases"/>
    <property type="match status" value="1"/>
</dbReference>
<dbReference type="InterPro" id="IPR003593">
    <property type="entry name" value="AAA+_ATPase"/>
</dbReference>
<dbReference type="InterPro" id="IPR013525">
    <property type="entry name" value="ABC2_TM"/>
</dbReference>
<dbReference type="InterPro" id="IPR003439">
    <property type="entry name" value="ABC_transporter-like_ATP-bd"/>
</dbReference>
<dbReference type="InterPro" id="IPR017871">
    <property type="entry name" value="ABC_transporter-like_CS"/>
</dbReference>
<dbReference type="InterPro" id="IPR026082">
    <property type="entry name" value="ABCA"/>
</dbReference>
<dbReference type="InterPro" id="IPR027417">
    <property type="entry name" value="P-loop_NTPase"/>
</dbReference>
<dbReference type="PANTHER" id="PTHR19229:SF154">
    <property type="entry name" value="ABC TRANSPORTER A FAMILY MEMBER 3-RELATED"/>
    <property type="match status" value="1"/>
</dbReference>
<dbReference type="PANTHER" id="PTHR19229">
    <property type="entry name" value="ATP-BINDING CASSETTE TRANSPORTER SUBFAMILY A ABCA"/>
    <property type="match status" value="1"/>
</dbReference>
<dbReference type="Pfam" id="PF12698">
    <property type="entry name" value="ABC2_membrane_3"/>
    <property type="match status" value="1"/>
</dbReference>
<dbReference type="Pfam" id="PF00005">
    <property type="entry name" value="ABC_tran"/>
    <property type="match status" value="1"/>
</dbReference>
<dbReference type="Pfam" id="PF24526">
    <property type="entry name" value="ABCA12_C"/>
    <property type="match status" value="1"/>
</dbReference>
<dbReference type="SMART" id="SM00382">
    <property type="entry name" value="AAA"/>
    <property type="match status" value="1"/>
</dbReference>
<dbReference type="SUPFAM" id="SSF52540">
    <property type="entry name" value="P-loop containing nucleoside triphosphate hydrolases"/>
    <property type="match status" value="1"/>
</dbReference>
<dbReference type="PROSITE" id="PS00211">
    <property type="entry name" value="ABC_TRANSPORTER_1"/>
    <property type="match status" value="1"/>
</dbReference>
<dbReference type="PROSITE" id="PS50893">
    <property type="entry name" value="ABC_TRANSPORTER_2"/>
    <property type="match status" value="1"/>
</dbReference>
<proteinExistence type="inferred from homology"/>
<protein>
    <recommendedName>
        <fullName>ABC transporter A family member 4</fullName>
        <shortName>ABC transporter ABCA.4</shortName>
        <shortName>AtABCA4</shortName>
    </recommendedName>
    <alternativeName>
        <fullName>Putative ABC2 homolog 3</fullName>
    </alternativeName>
</protein>
<keyword id="KW-0067">ATP-binding</keyword>
<keyword id="KW-0472">Membrane</keyword>
<keyword id="KW-0547">Nucleotide-binding</keyword>
<keyword id="KW-1185">Reference proteome</keyword>
<keyword id="KW-0812">Transmembrane</keyword>
<keyword id="KW-1133">Transmembrane helix</keyword>
<keyword id="KW-0813">Transport</keyword>
<sequence length="937" mass="105483">MANHVPASFLTRANALFRKNLTYQKRNIWSNVRLIVIPFYLCVLLVGIQVLFDTQVNNSADNRCGCRCIHKNGDGKCERKSCGLQYSSLTQASFCAFPNPPPLLPLLQIPRPETRLVDPARSSCRRTGSCPVTILVTGNNHTLGETLSRNLLSTSFAVNSSDHFLRNLAYNVLGTISEADYTNYLDPGIHSDLPIFQIRPYCTPTTNLSFSFRQPPITFHKEVRCVQGLNLWRNNSVEVNDEIFKGYRQGNHEEIINEVAAAYDLLDTDRNKFNVTIWYNSSYKGNFKVQDRRVKYVRVPRSVNMVSNAYLRFLRGPGTKMLFDFVKEMPKQESMLRVDIASVIGPIFLTWVIVLLFPVILNSLVYEKQQHLRIIMKMHGLGDGPYWMITYAYFLAISTLYIICLMIFGSAIGLKFFRFNDYSIQFIFYFLCINLQISIAFLVSSAFSKVETASVAAYLYVFGSGLLGGFLFQFMLEGLSFPRGWIFVMELYPGFSLYRGLYEFSQYALKRQLNGSDGMKWKYFSDSAMDEVFYIIIIEWFLALIAAYYMDRVSSSAKDPFLFLKNLIKKSPSPQRHSLQRLGSSVSVEMEKLDVVEERAKVEQLMLESSTSHAIVCDKLKKVYPGRDGNPPKMAVGGLSIAVPPGECFGMLGPNGAGKTSFINMMTGLVKPTSGTALVESLDICQDMDKVYTSMGVCPQHDLLWETLTGREHLLFYGRLKNLKGSDLNQAIEESLKSVNLSREGVADKPAGKYSGGMKRRLSVAISLIGSPKVVYMDEPSTGLDPASRRSLWTAIKGAKKHTAIILTTHSMEEAEFLCDRLGIFVDGRLQCVGNPKELKARYGGSYVLTMTTSSEHEKDVEMLIQDVSPNAKKIYHIAGTQKFEIPKDEVRIAELFQAVEKAKGNFRVFAWGLADTTLEDVFIKVARTAQASNVFS</sequence>
<evidence type="ECO:0000255" key="1"/>
<evidence type="ECO:0000255" key="2">
    <source>
        <dbReference type="PROSITE-ProRule" id="PRU00434"/>
    </source>
</evidence>
<evidence type="ECO:0000305" key="3"/>
<organism>
    <name type="scientific">Arabidopsis thaliana</name>
    <name type="common">Mouse-ear cress</name>
    <dbReference type="NCBI Taxonomy" id="3702"/>
    <lineage>
        <taxon>Eukaryota</taxon>
        <taxon>Viridiplantae</taxon>
        <taxon>Streptophyta</taxon>
        <taxon>Embryophyta</taxon>
        <taxon>Tracheophyta</taxon>
        <taxon>Spermatophyta</taxon>
        <taxon>Magnoliopsida</taxon>
        <taxon>eudicotyledons</taxon>
        <taxon>Gunneridae</taxon>
        <taxon>Pentapetalae</taxon>
        <taxon>rosids</taxon>
        <taxon>malvids</taxon>
        <taxon>Brassicales</taxon>
        <taxon>Brassicaceae</taxon>
        <taxon>Camelineae</taxon>
        <taxon>Arabidopsis</taxon>
    </lineage>
</organism>
<name>AB4A_ARATH</name>
<reference key="1">
    <citation type="journal article" date="2000" name="Nature">
        <title>Sequence and analysis of chromosome 3 of the plant Arabidopsis thaliana.</title>
        <authorList>
            <person name="Salanoubat M."/>
            <person name="Lemcke K."/>
            <person name="Rieger M."/>
            <person name="Ansorge W."/>
            <person name="Unseld M."/>
            <person name="Fartmann B."/>
            <person name="Valle G."/>
            <person name="Bloecker H."/>
            <person name="Perez-Alonso M."/>
            <person name="Obermaier B."/>
            <person name="Delseny M."/>
            <person name="Boutry M."/>
            <person name="Grivell L.A."/>
            <person name="Mache R."/>
            <person name="Puigdomenech P."/>
            <person name="De Simone V."/>
            <person name="Choisne N."/>
            <person name="Artiguenave F."/>
            <person name="Robert C."/>
            <person name="Brottier P."/>
            <person name="Wincker P."/>
            <person name="Cattolico L."/>
            <person name="Weissenbach J."/>
            <person name="Saurin W."/>
            <person name="Quetier F."/>
            <person name="Schaefer M."/>
            <person name="Mueller-Auer S."/>
            <person name="Gabel C."/>
            <person name="Fuchs M."/>
            <person name="Benes V."/>
            <person name="Wurmbach E."/>
            <person name="Drzonek H."/>
            <person name="Erfle H."/>
            <person name="Jordan N."/>
            <person name="Bangert S."/>
            <person name="Wiedelmann R."/>
            <person name="Kranz H."/>
            <person name="Voss H."/>
            <person name="Holland R."/>
            <person name="Brandt P."/>
            <person name="Nyakatura G."/>
            <person name="Vezzi A."/>
            <person name="D'Angelo M."/>
            <person name="Pallavicini A."/>
            <person name="Toppo S."/>
            <person name="Simionati B."/>
            <person name="Conrad A."/>
            <person name="Hornischer K."/>
            <person name="Kauer G."/>
            <person name="Loehnert T.-H."/>
            <person name="Nordsiek G."/>
            <person name="Reichelt J."/>
            <person name="Scharfe M."/>
            <person name="Schoen O."/>
            <person name="Bargues M."/>
            <person name="Terol J."/>
            <person name="Climent J."/>
            <person name="Navarro P."/>
            <person name="Collado C."/>
            <person name="Perez-Perez A."/>
            <person name="Ottenwaelder B."/>
            <person name="Duchemin D."/>
            <person name="Cooke R."/>
            <person name="Laudie M."/>
            <person name="Berger-Llauro C."/>
            <person name="Purnelle B."/>
            <person name="Masuy D."/>
            <person name="de Haan M."/>
            <person name="Maarse A.C."/>
            <person name="Alcaraz J.-P."/>
            <person name="Cottet A."/>
            <person name="Casacuberta E."/>
            <person name="Monfort A."/>
            <person name="Argiriou A."/>
            <person name="Flores M."/>
            <person name="Liguori R."/>
            <person name="Vitale D."/>
            <person name="Mannhaupt G."/>
            <person name="Haase D."/>
            <person name="Schoof H."/>
            <person name="Rudd S."/>
            <person name="Zaccaria P."/>
            <person name="Mewes H.-W."/>
            <person name="Mayer K.F.X."/>
            <person name="Kaul S."/>
            <person name="Town C.D."/>
            <person name="Koo H.L."/>
            <person name="Tallon L.J."/>
            <person name="Jenkins J."/>
            <person name="Rooney T."/>
            <person name="Rizzo M."/>
            <person name="Walts A."/>
            <person name="Utterback T."/>
            <person name="Fujii C.Y."/>
            <person name="Shea T.P."/>
            <person name="Creasy T.H."/>
            <person name="Haas B."/>
            <person name="Maiti R."/>
            <person name="Wu D."/>
            <person name="Peterson J."/>
            <person name="Van Aken S."/>
            <person name="Pai G."/>
            <person name="Militscher J."/>
            <person name="Sellers P."/>
            <person name="Gill J.E."/>
            <person name="Feldblyum T.V."/>
            <person name="Preuss D."/>
            <person name="Lin X."/>
            <person name="Nierman W.C."/>
            <person name="Salzberg S.L."/>
            <person name="White O."/>
            <person name="Venter J.C."/>
            <person name="Fraser C.M."/>
            <person name="Kaneko T."/>
            <person name="Nakamura Y."/>
            <person name="Sato S."/>
            <person name="Kato T."/>
            <person name="Asamizu E."/>
            <person name="Sasamoto S."/>
            <person name="Kimura T."/>
            <person name="Idesawa K."/>
            <person name="Kawashima K."/>
            <person name="Kishida Y."/>
            <person name="Kiyokawa C."/>
            <person name="Kohara M."/>
            <person name="Matsumoto M."/>
            <person name="Matsuno A."/>
            <person name="Muraki A."/>
            <person name="Nakayama S."/>
            <person name="Nakazaki N."/>
            <person name="Shinpo S."/>
            <person name="Takeuchi C."/>
            <person name="Wada T."/>
            <person name="Watanabe A."/>
            <person name="Yamada M."/>
            <person name="Yasuda M."/>
            <person name="Tabata S."/>
        </authorList>
    </citation>
    <scope>NUCLEOTIDE SEQUENCE [LARGE SCALE GENOMIC DNA]</scope>
    <source>
        <strain>cv. Columbia</strain>
    </source>
</reference>
<reference key="2">
    <citation type="journal article" date="2017" name="Plant J.">
        <title>Araport11: a complete reannotation of the Arabidopsis thaliana reference genome.</title>
        <authorList>
            <person name="Cheng C.Y."/>
            <person name="Krishnakumar V."/>
            <person name="Chan A.P."/>
            <person name="Thibaud-Nissen F."/>
            <person name="Schobel S."/>
            <person name="Town C.D."/>
        </authorList>
    </citation>
    <scope>GENOME REANNOTATION</scope>
    <source>
        <strain>cv. Columbia</strain>
    </source>
</reference>
<reference key="3">
    <citation type="journal article" date="2001" name="J. Biol. Chem.">
        <title>The Arabidopsis thaliana ABC protein superfamily, a complete inventory.</title>
        <authorList>
            <person name="Sanchez-Fernandez R."/>
            <person name="Davies T.G."/>
            <person name="Coleman J.O."/>
            <person name="Rea P.A."/>
        </authorList>
    </citation>
    <scope>GENE FAMILY</scope>
    <scope>NOMENCLATURE</scope>
</reference>
<reference key="4">
    <citation type="journal article" date="2008" name="Trends Plant Sci.">
        <title>Plant ABC proteins - a unified nomenclature and updated inventory.</title>
        <authorList>
            <person name="Verrier P.J."/>
            <person name="Bird D."/>
            <person name="Burla B."/>
            <person name="Dassa E."/>
            <person name="Forestier C."/>
            <person name="Geisler M."/>
            <person name="Klein M."/>
            <person name="Kolukisaoglu H.U."/>
            <person name="Lee Y."/>
            <person name="Martinoia E."/>
            <person name="Murphy A."/>
            <person name="Rea P.A."/>
            <person name="Samuels L."/>
            <person name="Schulz B."/>
            <person name="Spalding E.J."/>
            <person name="Yazaki K."/>
            <person name="Theodoulou F.L."/>
        </authorList>
    </citation>
    <scope>GENE FAMILY</scope>
    <scope>NOMENCLATURE</scope>
</reference>
<accession>Q9STT8</accession>
<accession>F4JCP3</accession>
<gene>
    <name type="primary">ABCA4</name>
    <name type="synonym">ATH3</name>
    <name type="ordered locus">At3g47750</name>
    <name type="ORF">T23J7.80</name>
</gene>